<sequence length="87" mass="9565">MMMKFINIGYGNMVSAARIITIVSPDSAPIKRIIQDARESGKLVDATHGRRTRAVIIMDSDHVILSSVQPETVANRLYGSDDFSEEG</sequence>
<proteinExistence type="inferred from homology"/>
<protein>
    <recommendedName>
        <fullName evidence="1">Putative regulatory protein GK1166</fullName>
    </recommendedName>
</protein>
<accession>Q5L0S9</accession>
<comment type="similarity">
    <text evidence="1">Belongs to the RemA family.</text>
</comment>
<keyword id="KW-1185">Reference proteome</keyword>
<organism>
    <name type="scientific">Geobacillus kaustophilus (strain HTA426)</name>
    <dbReference type="NCBI Taxonomy" id="235909"/>
    <lineage>
        <taxon>Bacteria</taxon>
        <taxon>Bacillati</taxon>
        <taxon>Bacillota</taxon>
        <taxon>Bacilli</taxon>
        <taxon>Bacillales</taxon>
        <taxon>Anoxybacillaceae</taxon>
        <taxon>Geobacillus</taxon>
        <taxon>Geobacillus thermoleovorans group</taxon>
    </lineage>
</organism>
<gene>
    <name type="ordered locus">GK1166</name>
</gene>
<dbReference type="EMBL" id="BA000043">
    <property type="protein sequence ID" value="BAD75451.1"/>
    <property type="molecule type" value="Genomic_DNA"/>
</dbReference>
<dbReference type="SMR" id="Q5L0S9"/>
<dbReference type="STRING" id="235909.GK1166"/>
<dbReference type="KEGG" id="gka:GK1166"/>
<dbReference type="eggNOG" id="COG2052">
    <property type="taxonomic scope" value="Bacteria"/>
</dbReference>
<dbReference type="HOGENOM" id="CLU_165326_0_0_9"/>
<dbReference type="Proteomes" id="UP000001172">
    <property type="component" value="Chromosome"/>
</dbReference>
<dbReference type="HAMAP" id="MF_01503">
    <property type="entry name" value="RemA"/>
    <property type="match status" value="1"/>
</dbReference>
<dbReference type="InterPro" id="IPR007169">
    <property type="entry name" value="RemA-like"/>
</dbReference>
<dbReference type="NCBIfam" id="NF046064">
    <property type="entry name" value="MtxBflmRegRemA"/>
    <property type="match status" value="1"/>
</dbReference>
<dbReference type="NCBIfam" id="NF003315">
    <property type="entry name" value="PRK04323.1"/>
    <property type="match status" value="1"/>
</dbReference>
<dbReference type="PANTHER" id="PTHR38449:SF1">
    <property type="entry name" value="REGULATORY PROTEIN SSL2874-RELATED"/>
    <property type="match status" value="1"/>
</dbReference>
<dbReference type="PANTHER" id="PTHR38449">
    <property type="entry name" value="REGULATORY PROTEIN TM_1690-RELATED"/>
    <property type="match status" value="1"/>
</dbReference>
<dbReference type="Pfam" id="PF04025">
    <property type="entry name" value="RemA-like"/>
    <property type="match status" value="1"/>
</dbReference>
<name>Y1166_GEOKA</name>
<reference key="1">
    <citation type="journal article" date="2004" name="Nucleic Acids Res.">
        <title>Thermoadaptation trait revealed by the genome sequence of thermophilic Geobacillus kaustophilus.</title>
        <authorList>
            <person name="Takami H."/>
            <person name="Takaki Y."/>
            <person name="Chee G.-J."/>
            <person name="Nishi S."/>
            <person name="Shimamura S."/>
            <person name="Suzuki H."/>
            <person name="Matsui S."/>
            <person name="Uchiyama I."/>
        </authorList>
    </citation>
    <scope>NUCLEOTIDE SEQUENCE [LARGE SCALE GENOMIC DNA]</scope>
    <source>
        <strain>HTA426</strain>
    </source>
</reference>
<feature type="chain" id="PRO_0000050231" description="Putative regulatory protein GK1166">
    <location>
        <begin position="1"/>
        <end position="87"/>
    </location>
</feature>
<evidence type="ECO:0000255" key="1">
    <source>
        <dbReference type="HAMAP-Rule" id="MF_01503"/>
    </source>
</evidence>